<dbReference type="EMBL" id="AJ003148">
    <property type="protein sequence ID" value="CAA05907.1"/>
    <property type="status" value="ALT_INIT"/>
    <property type="molecule type" value="mRNA"/>
</dbReference>
<dbReference type="EMBL" id="AJ131902">
    <property type="protein sequence ID" value="CAA10525.1"/>
    <property type="status" value="ALT_INIT"/>
    <property type="molecule type" value="mRNA"/>
</dbReference>
<dbReference type="SMR" id="O55148"/>
<dbReference type="FunCoup" id="O55148">
    <property type="interactions" value="80"/>
</dbReference>
<dbReference type="STRING" id="10116.ENSRNOP00000068570"/>
<dbReference type="PhosphoSitePlus" id="O55148"/>
<dbReference type="PaxDb" id="10116-ENSRNOP00000067551"/>
<dbReference type="UCSC" id="RGD:621550">
    <property type="organism name" value="rat"/>
</dbReference>
<dbReference type="AGR" id="RGD:621550"/>
<dbReference type="RGD" id="621550">
    <property type="gene designation" value="Gas7"/>
</dbReference>
<dbReference type="eggNOG" id="KOG0940">
    <property type="taxonomic scope" value="Eukaryota"/>
</dbReference>
<dbReference type="eggNOG" id="KOG2398">
    <property type="taxonomic scope" value="Eukaryota"/>
</dbReference>
<dbReference type="InParanoid" id="O55148"/>
<dbReference type="PhylomeDB" id="O55148"/>
<dbReference type="PRO" id="PR:O55148"/>
<dbReference type="Proteomes" id="UP000002494">
    <property type="component" value="Unplaced"/>
</dbReference>
<dbReference type="GO" id="GO:0005884">
    <property type="term" value="C:actin filament"/>
    <property type="evidence" value="ECO:0000266"/>
    <property type="project" value="RGD"/>
</dbReference>
<dbReference type="GO" id="GO:0005905">
    <property type="term" value="C:clathrin-coated pit"/>
    <property type="evidence" value="ECO:0000318"/>
    <property type="project" value="GO_Central"/>
</dbReference>
<dbReference type="GO" id="GO:0030136">
    <property type="term" value="C:clathrin-coated vesicle"/>
    <property type="evidence" value="ECO:0000318"/>
    <property type="project" value="GO_Central"/>
</dbReference>
<dbReference type="GO" id="GO:0005737">
    <property type="term" value="C:cytoplasm"/>
    <property type="evidence" value="ECO:0000318"/>
    <property type="project" value="GO_Central"/>
</dbReference>
<dbReference type="GO" id="GO:0001726">
    <property type="term" value="C:ruffle"/>
    <property type="evidence" value="ECO:0000266"/>
    <property type="project" value="RGD"/>
</dbReference>
<dbReference type="GO" id="GO:0051015">
    <property type="term" value="F:actin filament binding"/>
    <property type="evidence" value="ECO:0000266"/>
    <property type="project" value="RGD"/>
</dbReference>
<dbReference type="GO" id="GO:0051017">
    <property type="term" value="P:actin filament bundle assembly"/>
    <property type="evidence" value="ECO:0000266"/>
    <property type="project" value="RGD"/>
</dbReference>
<dbReference type="GO" id="GO:0030041">
    <property type="term" value="P:actin filament polymerization"/>
    <property type="evidence" value="ECO:0000266"/>
    <property type="project" value="RGD"/>
</dbReference>
<dbReference type="GO" id="GO:0048268">
    <property type="term" value="P:clathrin coat assembly"/>
    <property type="evidence" value="ECO:0000318"/>
    <property type="project" value="GO_Central"/>
</dbReference>
<dbReference type="GO" id="GO:0072583">
    <property type="term" value="P:clathrin-dependent endocytosis"/>
    <property type="evidence" value="ECO:0000318"/>
    <property type="project" value="GO_Central"/>
</dbReference>
<dbReference type="GO" id="GO:0030182">
    <property type="term" value="P:neuron differentiation"/>
    <property type="evidence" value="ECO:0000266"/>
    <property type="project" value="RGD"/>
</dbReference>
<dbReference type="GO" id="GO:0048812">
    <property type="term" value="P:neuron projection morphogenesis"/>
    <property type="evidence" value="ECO:0000266"/>
    <property type="project" value="RGD"/>
</dbReference>
<dbReference type="GO" id="GO:0008360">
    <property type="term" value="P:regulation of cell shape"/>
    <property type="evidence" value="ECO:0000266"/>
    <property type="project" value="RGD"/>
</dbReference>
<dbReference type="CDD" id="cd07649">
    <property type="entry name" value="F-BAR_GAS7"/>
    <property type="match status" value="1"/>
</dbReference>
<dbReference type="FunFam" id="2.20.70.10:FF:000033">
    <property type="entry name" value="Growth arrest specific 7"/>
    <property type="match status" value="1"/>
</dbReference>
<dbReference type="FunFam" id="1.20.1270.60:FF:000024">
    <property type="entry name" value="growth arrest-specific protein 7 isoform X2"/>
    <property type="match status" value="1"/>
</dbReference>
<dbReference type="Gene3D" id="2.20.70.10">
    <property type="match status" value="1"/>
</dbReference>
<dbReference type="Gene3D" id="1.20.1270.60">
    <property type="entry name" value="Arfaptin homology (AH) domain/BAR domain"/>
    <property type="match status" value="1"/>
</dbReference>
<dbReference type="InterPro" id="IPR027267">
    <property type="entry name" value="AH/BAR_dom_sf"/>
</dbReference>
<dbReference type="InterPro" id="IPR031160">
    <property type="entry name" value="F_BAR"/>
</dbReference>
<dbReference type="InterPro" id="IPR001060">
    <property type="entry name" value="FCH_dom"/>
</dbReference>
<dbReference type="InterPro" id="IPR037957">
    <property type="entry name" value="GAS7_F-BAR"/>
</dbReference>
<dbReference type="InterPro" id="IPR001202">
    <property type="entry name" value="WW_dom"/>
</dbReference>
<dbReference type="InterPro" id="IPR036020">
    <property type="entry name" value="WW_dom_sf"/>
</dbReference>
<dbReference type="PANTHER" id="PTHR23065:SF57">
    <property type="entry name" value="GROWTH ARREST-SPECIFIC PROTEIN 7"/>
    <property type="match status" value="1"/>
</dbReference>
<dbReference type="PANTHER" id="PTHR23065">
    <property type="entry name" value="PROLINE-SERINE-THREONINE PHOSPHATASE INTERACTING PROTEIN 1"/>
    <property type="match status" value="1"/>
</dbReference>
<dbReference type="Pfam" id="PF00611">
    <property type="entry name" value="FCH"/>
    <property type="match status" value="1"/>
</dbReference>
<dbReference type="Pfam" id="PF00397">
    <property type="entry name" value="WW"/>
    <property type="match status" value="1"/>
</dbReference>
<dbReference type="Pfam" id="PF16623">
    <property type="entry name" value="WW_FCH_linker"/>
    <property type="match status" value="1"/>
</dbReference>
<dbReference type="SMART" id="SM00055">
    <property type="entry name" value="FCH"/>
    <property type="match status" value="1"/>
</dbReference>
<dbReference type="SMART" id="SM00456">
    <property type="entry name" value="WW"/>
    <property type="match status" value="1"/>
</dbReference>
<dbReference type="SUPFAM" id="SSF103657">
    <property type="entry name" value="BAR/IMD domain-like"/>
    <property type="match status" value="1"/>
</dbReference>
<dbReference type="SUPFAM" id="SSF51045">
    <property type="entry name" value="WW domain"/>
    <property type="match status" value="1"/>
</dbReference>
<dbReference type="PROSITE" id="PS51741">
    <property type="entry name" value="F_BAR"/>
    <property type="match status" value="1"/>
</dbReference>
<dbReference type="PROSITE" id="PS01159">
    <property type="entry name" value="WW_DOMAIN_1"/>
    <property type="match status" value="1"/>
</dbReference>
<dbReference type="PROSITE" id="PS50020">
    <property type="entry name" value="WW_DOMAIN_2"/>
    <property type="match status" value="1"/>
</dbReference>
<sequence>MATALQKPGMVPPPPGEESQTVILPPGWHSYLSPQGRRYYVNTTTNETTWERPSSSPGISASPGPHRSSLPTTVNGYHASGTPAHPPETAHMSLRKSTGDSQNLGSSSPGRKQSKENTITINCVTFPHPDTMPEQQLLKPTEWSYCDYFWADKKDPQGNGTVAGFELLLQKQLKGKQMQKEMSEFIRERIKIEEEYAKNLAKLSQNSLAAQEEGSLGEAWAQVKKSLADEAEVHLKFSAKLHSEVEKPLMNFRENFKKDMKKCDHHIADLRKQLGESRYASVEKARKALTERQKDLEMKTQQLEIKLSNKTEEDIKKARRKSTQAGDDLMRCVDLYNQAQSKWFEEMVTTTLELERLEVERVEMIRQHLCQYTQLRHETDMFNQSTVEPVDQLLRKVDPAKDRELWVREHKTGNIRPVDMEI</sequence>
<comment type="function">
    <text>May play a role in promoting maturation and morphological differentiation of cerebellar neurons.</text>
</comment>
<comment type="subcellular location">
    <subcellularLocation>
        <location evidence="1">Cytoplasm</location>
    </subcellularLocation>
</comment>
<comment type="sequence caution" evidence="8">
    <conflict type="erroneous initiation">
        <sequence resource="EMBL-CDS" id="CAA05907"/>
    </conflict>
</comment>
<comment type="sequence caution" evidence="8">
    <conflict type="erroneous initiation">
        <sequence resource="EMBL-CDS" id="CAA10525"/>
    </conflict>
</comment>
<accession>O55148</accession>
<feature type="chain" id="PRO_0000076059" description="Growth arrest-specific protein 7">
    <location>
        <begin position="1"/>
        <end position="422"/>
    </location>
</feature>
<feature type="domain" description="WW" evidence="5">
    <location>
        <begin position="22"/>
        <end position="55"/>
    </location>
</feature>
<feature type="domain" description="F-BAR" evidence="6">
    <location>
        <begin position="141"/>
        <end position="402"/>
    </location>
</feature>
<feature type="region of interest" description="Disordered" evidence="7">
    <location>
        <begin position="1"/>
        <end position="117"/>
    </location>
</feature>
<feature type="coiled-coil region" evidence="4">
    <location>
        <begin position="254"/>
        <end position="329"/>
    </location>
</feature>
<feature type="compositionally biased region" description="Polar residues" evidence="7">
    <location>
        <begin position="41"/>
        <end position="52"/>
    </location>
</feature>
<feature type="compositionally biased region" description="Low complexity" evidence="7">
    <location>
        <begin position="53"/>
        <end position="65"/>
    </location>
</feature>
<feature type="compositionally biased region" description="Polar residues" evidence="7">
    <location>
        <begin position="95"/>
        <end position="117"/>
    </location>
</feature>
<feature type="modified residue" description="Phosphoserine" evidence="2">
    <location>
        <position position="62"/>
    </location>
</feature>
<feature type="modified residue" description="Phosphoserine" evidence="3">
    <location>
        <position position="108"/>
    </location>
</feature>
<protein>
    <recommendedName>
        <fullName>Growth arrest-specific protein 7</fullName>
        <shortName>GAS-7</shortName>
    </recommendedName>
</protein>
<gene>
    <name type="primary">Gas7</name>
</gene>
<evidence type="ECO:0000250" key="1"/>
<evidence type="ECO:0000250" key="2">
    <source>
        <dbReference type="UniProtKB" id="O60861"/>
    </source>
</evidence>
<evidence type="ECO:0000250" key="3">
    <source>
        <dbReference type="UniProtKB" id="Q60780"/>
    </source>
</evidence>
<evidence type="ECO:0000255" key="4"/>
<evidence type="ECO:0000255" key="5">
    <source>
        <dbReference type="PROSITE-ProRule" id="PRU00224"/>
    </source>
</evidence>
<evidence type="ECO:0000255" key="6">
    <source>
        <dbReference type="PROSITE-ProRule" id="PRU01077"/>
    </source>
</evidence>
<evidence type="ECO:0000256" key="7">
    <source>
        <dbReference type="SAM" id="MobiDB-lite"/>
    </source>
</evidence>
<evidence type="ECO:0000305" key="8"/>
<name>GAS7_RAT</name>
<keyword id="KW-0175">Coiled coil</keyword>
<keyword id="KW-0963">Cytoplasm</keyword>
<keyword id="KW-0217">Developmental protein</keyword>
<keyword id="KW-0221">Differentiation</keyword>
<keyword id="KW-0524">Neurogenesis</keyword>
<keyword id="KW-0597">Phosphoprotein</keyword>
<keyword id="KW-1185">Reference proteome</keyword>
<organism>
    <name type="scientific">Rattus norvegicus</name>
    <name type="common">Rat</name>
    <dbReference type="NCBI Taxonomy" id="10116"/>
    <lineage>
        <taxon>Eukaryota</taxon>
        <taxon>Metazoa</taxon>
        <taxon>Chordata</taxon>
        <taxon>Craniata</taxon>
        <taxon>Vertebrata</taxon>
        <taxon>Euteleostomi</taxon>
        <taxon>Mammalia</taxon>
        <taxon>Eutheria</taxon>
        <taxon>Euarchontoglires</taxon>
        <taxon>Glires</taxon>
        <taxon>Rodentia</taxon>
        <taxon>Myomorpha</taxon>
        <taxon>Muroidea</taxon>
        <taxon>Muridae</taxon>
        <taxon>Murinae</taxon>
        <taxon>Rattus</taxon>
    </lineage>
</organism>
<reference key="1">
    <citation type="submission" date="1997-12" db="EMBL/GenBank/DDBJ databases">
        <title>Rat gas-7: a growth-arrest-specific gene in fibroblasts is preferentially expressed in terminally differentiated Purkinje neurons and associated with the differentiation of cultured PC12 cells.</title>
        <authorList>
            <person name="Chao C.C.-K."/>
            <person name="Kuo J.D."/>
            <person name="Su L.J."/>
            <person name="Liu C.H."/>
            <person name="Lih C.J."/>
            <person name="Cohen S.N."/>
            <person name="Lin-Chao S."/>
        </authorList>
    </citation>
    <scope>NUCLEOTIDE SEQUENCE [MRNA]</scope>
    <source>
        <strain>Sprague-Dawley</strain>
        <tissue>Brain</tissue>
    </source>
</reference>
<proteinExistence type="evidence at transcript level"/>